<feature type="chain" id="PRO_0000194463" description="Pantothenate kinase">
    <location>
        <begin position="1"/>
        <end position="316"/>
    </location>
</feature>
<feature type="binding site" evidence="1">
    <location>
        <begin position="95"/>
        <end position="102"/>
    </location>
    <ligand>
        <name>ATP</name>
        <dbReference type="ChEBI" id="CHEBI:30616"/>
    </ligand>
</feature>
<reference key="1">
    <citation type="journal article" date="2001" name="Nature">
        <title>Genome sequence of Yersinia pestis, the causative agent of plague.</title>
        <authorList>
            <person name="Parkhill J."/>
            <person name="Wren B.W."/>
            <person name="Thomson N.R."/>
            <person name="Titball R.W."/>
            <person name="Holden M.T.G."/>
            <person name="Prentice M.B."/>
            <person name="Sebaihia M."/>
            <person name="James K.D."/>
            <person name="Churcher C.M."/>
            <person name="Mungall K.L."/>
            <person name="Baker S."/>
            <person name="Basham D."/>
            <person name="Bentley S.D."/>
            <person name="Brooks K."/>
            <person name="Cerdeno-Tarraga A.-M."/>
            <person name="Chillingworth T."/>
            <person name="Cronin A."/>
            <person name="Davies R.M."/>
            <person name="Davis P."/>
            <person name="Dougan G."/>
            <person name="Feltwell T."/>
            <person name="Hamlin N."/>
            <person name="Holroyd S."/>
            <person name="Jagels K."/>
            <person name="Karlyshev A.V."/>
            <person name="Leather S."/>
            <person name="Moule S."/>
            <person name="Oyston P.C.F."/>
            <person name="Quail M.A."/>
            <person name="Rutherford K.M."/>
            <person name="Simmonds M."/>
            <person name="Skelton J."/>
            <person name="Stevens K."/>
            <person name="Whitehead S."/>
            <person name="Barrell B.G."/>
        </authorList>
    </citation>
    <scope>NUCLEOTIDE SEQUENCE [LARGE SCALE GENOMIC DNA]</scope>
    <source>
        <strain>CO-92 / Biovar Orientalis</strain>
    </source>
</reference>
<reference key="2">
    <citation type="journal article" date="2002" name="J. Bacteriol.">
        <title>Genome sequence of Yersinia pestis KIM.</title>
        <authorList>
            <person name="Deng W."/>
            <person name="Burland V."/>
            <person name="Plunkett G. III"/>
            <person name="Boutin A."/>
            <person name="Mayhew G.F."/>
            <person name="Liss P."/>
            <person name="Perna N.T."/>
            <person name="Rose D.J."/>
            <person name="Mau B."/>
            <person name="Zhou S."/>
            <person name="Schwartz D.C."/>
            <person name="Fetherston J.D."/>
            <person name="Lindler L.E."/>
            <person name="Brubaker R.R."/>
            <person name="Plano G.V."/>
            <person name="Straley S.C."/>
            <person name="McDonough K.A."/>
            <person name="Nilles M.L."/>
            <person name="Matson J.S."/>
            <person name="Blattner F.R."/>
            <person name="Perry R.D."/>
        </authorList>
    </citation>
    <scope>NUCLEOTIDE SEQUENCE [LARGE SCALE GENOMIC DNA]</scope>
    <source>
        <strain>KIM10+ / Biovar Mediaevalis</strain>
    </source>
</reference>
<reference key="3">
    <citation type="journal article" date="2004" name="DNA Res.">
        <title>Complete genome sequence of Yersinia pestis strain 91001, an isolate avirulent to humans.</title>
        <authorList>
            <person name="Song Y."/>
            <person name="Tong Z."/>
            <person name="Wang J."/>
            <person name="Wang L."/>
            <person name="Guo Z."/>
            <person name="Han Y."/>
            <person name="Zhang J."/>
            <person name="Pei D."/>
            <person name="Zhou D."/>
            <person name="Qin H."/>
            <person name="Pang X."/>
            <person name="Han Y."/>
            <person name="Zhai J."/>
            <person name="Li M."/>
            <person name="Cui B."/>
            <person name="Qi Z."/>
            <person name="Jin L."/>
            <person name="Dai R."/>
            <person name="Chen F."/>
            <person name="Li S."/>
            <person name="Ye C."/>
            <person name="Du Z."/>
            <person name="Lin W."/>
            <person name="Wang J."/>
            <person name="Yu J."/>
            <person name="Yang H."/>
            <person name="Wang J."/>
            <person name="Huang P."/>
            <person name="Yang R."/>
        </authorList>
    </citation>
    <scope>NUCLEOTIDE SEQUENCE [LARGE SCALE GENOMIC DNA]</scope>
    <source>
        <strain>91001 / Biovar Mediaevalis</strain>
    </source>
</reference>
<gene>
    <name evidence="1" type="primary">coaA</name>
    <name type="ordered locus">YPO3758</name>
    <name type="ordered locus">y0473</name>
    <name type="ordered locus">YP_3290</name>
</gene>
<name>COAA_YERPE</name>
<keyword id="KW-0067">ATP-binding</keyword>
<keyword id="KW-0173">Coenzyme A biosynthesis</keyword>
<keyword id="KW-0963">Cytoplasm</keyword>
<keyword id="KW-0418">Kinase</keyword>
<keyword id="KW-0547">Nucleotide-binding</keyword>
<keyword id="KW-1185">Reference proteome</keyword>
<keyword id="KW-0808">Transferase</keyword>
<evidence type="ECO:0000255" key="1">
    <source>
        <dbReference type="HAMAP-Rule" id="MF_00215"/>
    </source>
</evidence>
<comment type="catalytic activity">
    <reaction evidence="1">
        <text>(R)-pantothenate + ATP = (R)-4'-phosphopantothenate + ADP + H(+)</text>
        <dbReference type="Rhea" id="RHEA:16373"/>
        <dbReference type="ChEBI" id="CHEBI:10986"/>
        <dbReference type="ChEBI" id="CHEBI:15378"/>
        <dbReference type="ChEBI" id="CHEBI:29032"/>
        <dbReference type="ChEBI" id="CHEBI:30616"/>
        <dbReference type="ChEBI" id="CHEBI:456216"/>
        <dbReference type="EC" id="2.7.1.33"/>
    </reaction>
</comment>
<comment type="pathway">
    <text evidence="1">Cofactor biosynthesis; coenzyme A biosynthesis; CoA from (R)-pantothenate: step 1/5.</text>
</comment>
<comment type="subcellular location">
    <subcellularLocation>
        <location evidence="1">Cytoplasm</location>
    </subcellularLocation>
</comment>
<comment type="similarity">
    <text evidence="1">Belongs to the prokaryotic pantothenate kinase family.</text>
</comment>
<organism>
    <name type="scientific">Yersinia pestis</name>
    <dbReference type="NCBI Taxonomy" id="632"/>
    <lineage>
        <taxon>Bacteria</taxon>
        <taxon>Pseudomonadati</taxon>
        <taxon>Pseudomonadota</taxon>
        <taxon>Gammaproteobacteria</taxon>
        <taxon>Enterobacterales</taxon>
        <taxon>Yersiniaceae</taxon>
        <taxon>Yersinia</taxon>
    </lineage>
</organism>
<protein>
    <recommendedName>
        <fullName evidence="1">Pantothenate kinase</fullName>
        <ecNumber evidence="1">2.7.1.33</ecNumber>
    </recommendedName>
    <alternativeName>
        <fullName evidence="1">Pantothenic acid kinase</fullName>
    </alternativeName>
</protein>
<dbReference type="EC" id="2.7.1.33" evidence="1"/>
<dbReference type="EMBL" id="AL590842">
    <property type="protein sequence ID" value="CAL22345.1"/>
    <property type="molecule type" value="Genomic_DNA"/>
</dbReference>
<dbReference type="EMBL" id="AE009952">
    <property type="protein sequence ID" value="AAM84062.1"/>
    <property type="molecule type" value="Genomic_DNA"/>
</dbReference>
<dbReference type="EMBL" id="AE017042">
    <property type="protein sequence ID" value="AAS63457.1"/>
    <property type="molecule type" value="Genomic_DNA"/>
</dbReference>
<dbReference type="PIR" id="AF0457">
    <property type="entry name" value="AF0457"/>
</dbReference>
<dbReference type="RefSeq" id="WP_002212290.1">
    <property type="nucleotide sequence ID" value="NZ_WUCM01000139.1"/>
</dbReference>
<dbReference type="RefSeq" id="YP_002348638.1">
    <property type="nucleotide sequence ID" value="NC_003143.1"/>
</dbReference>
<dbReference type="SMR" id="Q8ZAN6"/>
<dbReference type="STRING" id="214092.YPO3758"/>
<dbReference type="PaxDb" id="214092-YPO3758"/>
<dbReference type="DNASU" id="1145420"/>
<dbReference type="EnsemblBacteria" id="AAS63457">
    <property type="protein sequence ID" value="AAS63457"/>
    <property type="gene ID" value="YP_3290"/>
</dbReference>
<dbReference type="GeneID" id="57974956"/>
<dbReference type="KEGG" id="ype:YPO3758"/>
<dbReference type="KEGG" id="ypk:y0473"/>
<dbReference type="KEGG" id="ypm:YP_3290"/>
<dbReference type="PATRIC" id="fig|214092.21.peg.4278"/>
<dbReference type="eggNOG" id="COG1072">
    <property type="taxonomic scope" value="Bacteria"/>
</dbReference>
<dbReference type="HOGENOM" id="CLU_053818_1_1_6"/>
<dbReference type="OMA" id="MQRKGFP"/>
<dbReference type="OrthoDB" id="1550976at2"/>
<dbReference type="UniPathway" id="UPA00241">
    <property type="reaction ID" value="UER00352"/>
</dbReference>
<dbReference type="Proteomes" id="UP000000815">
    <property type="component" value="Chromosome"/>
</dbReference>
<dbReference type="Proteomes" id="UP000001019">
    <property type="component" value="Chromosome"/>
</dbReference>
<dbReference type="Proteomes" id="UP000002490">
    <property type="component" value="Chromosome"/>
</dbReference>
<dbReference type="GO" id="GO:0005737">
    <property type="term" value="C:cytoplasm"/>
    <property type="evidence" value="ECO:0000318"/>
    <property type="project" value="GO_Central"/>
</dbReference>
<dbReference type="GO" id="GO:0005524">
    <property type="term" value="F:ATP binding"/>
    <property type="evidence" value="ECO:0007669"/>
    <property type="project" value="UniProtKB-UniRule"/>
</dbReference>
<dbReference type="GO" id="GO:0004594">
    <property type="term" value="F:pantothenate kinase activity"/>
    <property type="evidence" value="ECO:0000318"/>
    <property type="project" value="GO_Central"/>
</dbReference>
<dbReference type="GO" id="GO:0015937">
    <property type="term" value="P:coenzyme A biosynthetic process"/>
    <property type="evidence" value="ECO:0000318"/>
    <property type="project" value="GO_Central"/>
</dbReference>
<dbReference type="CDD" id="cd02025">
    <property type="entry name" value="PanK"/>
    <property type="match status" value="1"/>
</dbReference>
<dbReference type="FunFam" id="3.40.50.300:FF:000242">
    <property type="entry name" value="Pantothenate kinase"/>
    <property type="match status" value="1"/>
</dbReference>
<dbReference type="Gene3D" id="3.40.50.300">
    <property type="entry name" value="P-loop containing nucleotide triphosphate hydrolases"/>
    <property type="match status" value="1"/>
</dbReference>
<dbReference type="HAMAP" id="MF_00215">
    <property type="entry name" value="Pantothen_kinase_1"/>
    <property type="match status" value="1"/>
</dbReference>
<dbReference type="InterPro" id="IPR027417">
    <property type="entry name" value="P-loop_NTPase"/>
</dbReference>
<dbReference type="InterPro" id="IPR004566">
    <property type="entry name" value="PanK"/>
</dbReference>
<dbReference type="InterPro" id="IPR006083">
    <property type="entry name" value="PRK/URK"/>
</dbReference>
<dbReference type="NCBIfam" id="TIGR00554">
    <property type="entry name" value="panK_bact"/>
    <property type="match status" value="1"/>
</dbReference>
<dbReference type="PANTHER" id="PTHR10285">
    <property type="entry name" value="URIDINE KINASE"/>
    <property type="match status" value="1"/>
</dbReference>
<dbReference type="Pfam" id="PF00485">
    <property type="entry name" value="PRK"/>
    <property type="match status" value="1"/>
</dbReference>
<dbReference type="PIRSF" id="PIRSF000545">
    <property type="entry name" value="Pantothenate_kin"/>
    <property type="match status" value="1"/>
</dbReference>
<dbReference type="SUPFAM" id="SSF52540">
    <property type="entry name" value="P-loop containing nucleoside triphosphate hydrolases"/>
    <property type="match status" value="1"/>
</dbReference>
<sequence length="316" mass="36016">MTKREQSLATPYLQFDRTQWAALRDSVPLTLTEEEIVKLKGINEDLSLDEVAQIYLPLSRLLNFYISSNLRRQAVLEQFLGTDGQRIPYVIGIAGSVAVGKSTTARLLQALLSRWPEHRSVELITTDGFLHPNKVLNERGLMKKKGFPESYDMHNLVKFVSEVKSGADYVTAPVYSHLIYDVVPDGNKVIKQPDILILEGLNVLQSGMDYPHDPHHVFVSDFVDFSIYVDAPEDLLQSWYINRFLKFRQGAFSNPDSYFHNYAKLPETEAIKIATQLWNEINGLNLKQNILPTRERASLIMTKSANHAVESVRLRK</sequence>
<proteinExistence type="inferred from homology"/>
<accession>Q8ZAN6</accession>
<accession>Q0WAQ0</accession>